<feature type="chain" id="PRO_0000199519" description="Pregnancy-associated glycoprotein 57">
    <location>
        <begin position="1"/>
        <end position="20" status="greater than"/>
    </location>
</feature>
<feature type="non-terminal residue" evidence="1">
    <location>
        <position position="20"/>
    </location>
</feature>
<sequence>ISSRVSXLTIHPLRNIMDML</sequence>
<reference key="1">
    <citation type="journal article" date="2003" name="Mol. Reprod. Dev.">
        <title>Isolation and partial characterization of three pregnancy-associated glycoproteins from the ewe placenta.</title>
        <authorList>
            <person name="El Amiri B."/>
            <person name="Remy B."/>
            <person name="Sousa N.M."/>
            <person name="Joris B."/>
            <person name="Ottiers N.G."/>
            <person name="Perenyi Z."/>
            <person name="Mboko H.B."/>
            <person name="Beckers J.-F.M.P."/>
        </authorList>
    </citation>
    <scope>PROTEIN SEQUENCE</scope>
    <source>
        <tissue>Placenta</tissue>
    </source>
</reference>
<comment type="subcellular location">
    <subcellularLocation>
        <location>Secreted</location>
    </subcellularLocation>
</comment>
<comment type="PTM">
    <text evidence="1">Glycosylated.</text>
</comment>
<comment type="similarity">
    <text evidence="1">Belongs to the peptidase A1 family.</text>
</comment>
<dbReference type="EC" id="3.4.23.-"/>
<dbReference type="Proteomes" id="UP000002356">
    <property type="component" value="Unplaced"/>
</dbReference>
<dbReference type="GO" id="GO:0005576">
    <property type="term" value="C:extracellular region"/>
    <property type="evidence" value="ECO:0007669"/>
    <property type="project" value="UniProtKB-SubCell"/>
</dbReference>
<dbReference type="GO" id="GO:0004190">
    <property type="term" value="F:aspartic-type endopeptidase activity"/>
    <property type="evidence" value="ECO:0007669"/>
    <property type="project" value="UniProtKB-KW"/>
</dbReference>
<dbReference type="GO" id="GO:0006508">
    <property type="term" value="P:proteolysis"/>
    <property type="evidence" value="ECO:0007669"/>
    <property type="project" value="UniProtKB-KW"/>
</dbReference>
<organism evidence="1">
    <name type="scientific">Ovis aries</name>
    <name type="common">Sheep</name>
    <dbReference type="NCBI Taxonomy" id="9940"/>
    <lineage>
        <taxon>Eukaryota</taxon>
        <taxon>Metazoa</taxon>
        <taxon>Chordata</taxon>
        <taxon>Craniata</taxon>
        <taxon>Vertebrata</taxon>
        <taxon>Euteleostomi</taxon>
        <taxon>Mammalia</taxon>
        <taxon>Eutheria</taxon>
        <taxon>Laurasiatheria</taxon>
        <taxon>Artiodactyla</taxon>
        <taxon>Ruminantia</taxon>
        <taxon>Pecora</taxon>
        <taxon>Bovidae</taxon>
        <taxon>Caprinae</taxon>
        <taxon>Ovis</taxon>
    </lineage>
</organism>
<protein>
    <recommendedName>
        <fullName>Pregnancy-associated glycoprotein 57</fullName>
        <ecNumber>3.4.23.-</ecNumber>
    </recommendedName>
    <alternativeName>
        <fullName>ovPAG-57</fullName>
    </alternativeName>
</protein>
<accession>P83203</accession>
<proteinExistence type="evidence at protein level"/>
<keyword id="KW-0064">Aspartyl protease</keyword>
<keyword id="KW-0903">Direct protein sequencing</keyword>
<keyword id="KW-0325">Glycoprotein</keyword>
<keyword id="KW-0378">Hydrolase</keyword>
<keyword id="KW-0645">Protease</keyword>
<keyword id="KW-1185">Reference proteome</keyword>
<keyword id="KW-0964">Secreted</keyword>
<evidence type="ECO:0000305" key="1"/>
<name>PAG57_SHEEP</name>